<name>GCH1_BRUAB</name>
<organism>
    <name type="scientific">Brucella abortus biovar 1 (strain 9-941)</name>
    <dbReference type="NCBI Taxonomy" id="262698"/>
    <lineage>
        <taxon>Bacteria</taxon>
        <taxon>Pseudomonadati</taxon>
        <taxon>Pseudomonadota</taxon>
        <taxon>Alphaproteobacteria</taxon>
        <taxon>Hyphomicrobiales</taxon>
        <taxon>Brucellaceae</taxon>
        <taxon>Brucella/Ochrobactrum group</taxon>
        <taxon>Brucella</taxon>
    </lineage>
</organism>
<sequence length="213" mass="23776">MDARILQDNDDTSLPVNQASVTRIHKKPGKAEAEAAVRTLLLWAGEDPDREGLLETPKRVAKAYQELFGGYSESPEEVLGTTFEEVAGYDDMVLVKDISFFSHCEHHMVPIIGKAHVAYLPEGRVVGLSKIARVVDIFARRLQTQESITAQIADSIQRILKPRGVAVMIEAEHMCMAMRSIRKQGSSTITTTFTGDFKEKADQQVRFMTLIRT</sequence>
<proteinExistence type="inferred from homology"/>
<keyword id="KW-0342">GTP-binding</keyword>
<keyword id="KW-0378">Hydrolase</keyword>
<keyword id="KW-0479">Metal-binding</keyword>
<keyword id="KW-0547">Nucleotide-binding</keyword>
<keyword id="KW-0554">One-carbon metabolism</keyword>
<keyword id="KW-0862">Zinc</keyword>
<feature type="chain" id="PRO_1000043670" description="GTP cyclohydrolase 1">
    <location>
        <begin position="1"/>
        <end position="213"/>
    </location>
</feature>
<feature type="binding site" evidence="2">
    <location>
        <position position="104"/>
    </location>
    <ligand>
        <name>Zn(2+)</name>
        <dbReference type="ChEBI" id="CHEBI:29105"/>
    </ligand>
</feature>
<feature type="binding site" evidence="2">
    <location>
        <position position="107"/>
    </location>
    <ligand>
        <name>Zn(2+)</name>
        <dbReference type="ChEBI" id="CHEBI:29105"/>
    </ligand>
</feature>
<feature type="binding site" evidence="2">
    <location>
        <position position="175"/>
    </location>
    <ligand>
        <name>Zn(2+)</name>
        <dbReference type="ChEBI" id="CHEBI:29105"/>
    </ligand>
</feature>
<evidence type="ECO:0000250" key="1"/>
<evidence type="ECO:0000255" key="2">
    <source>
        <dbReference type="HAMAP-Rule" id="MF_00223"/>
    </source>
</evidence>
<comment type="catalytic activity">
    <reaction evidence="2">
        <text>GTP + H2O = 7,8-dihydroneopterin 3'-triphosphate + formate + H(+)</text>
        <dbReference type="Rhea" id="RHEA:17473"/>
        <dbReference type="ChEBI" id="CHEBI:15377"/>
        <dbReference type="ChEBI" id="CHEBI:15378"/>
        <dbReference type="ChEBI" id="CHEBI:15740"/>
        <dbReference type="ChEBI" id="CHEBI:37565"/>
        <dbReference type="ChEBI" id="CHEBI:58462"/>
        <dbReference type="EC" id="3.5.4.16"/>
    </reaction>
</comment>
<comment type="pathway">
    <text evidence="2">Cofactor biosynthesis; 7,8-dihydroneopterin triphosphate biosynthesis; 7,8-dihydroneopterin triphosphate from GTP: step 1/1.</text>
</comment>
<comment type="subunit">
    <text evidence="1">Toroid-shaped homodecamer, composed of two pentamers of five dimers.</text>
</comment>
<comment type="similarity">
    <text evidence="2">Belongs to the GTP cyclohydrolase I family.</text>
</comment>
<accession>Q57D61</accession>
<reference key="1">
    <citation type="journal article" date="2005" name="J. Bacteriol.">
        <title>Completion of the genome sequence of Brucella abortus and comparison to the highly similar genomes of Brucella melitensis and Brucella suis.</title>
        <authorList>
            <person name="Halling S.M."/>
            <person name="Peterson-Burch B.D."/>
            <person name="Bricker B.J."/>
            <person name="Zuerner R.L."/>
            <person name="Qing Z."/>
            <person name="Li L.-L."/>
            <person name="Kapur V."/>
            <person name="Alt D.P."/>
            <person name="Olsen S.C."/>
        </authorList>
    </citation>
    <scope>NUCLEOTIDE SEQUENCE [LARGE SCALE GENOMIC DNA]</scope>
    <source>
        <strain>9-941</strain>
    </source>
</reference>
<dbReference type="EC" id="3.5.4.16" evidence="2"/>
<dbReference type="EMBL" id="AE017223">
    <property type="protein sequence ID" value="AAX74423.1"/>
    <property type="molecule type" value="Genomic_DNA"/>
</dbReference>
<dbReference type="RefSeq" id="WP_002964194.1">
    <property type="nucleotide sequence ID" value="NC_006932.1"/>
</dbReference>
<dbReference type="SMR" id="Q57D61"/>
<dbReference type="EnsemblBacteria" id="AAX74423">
    <property type="protein sequence ID" value="AAX74423"/>
    <property type="gene ID" value="BruAb1_1080"/>
</dbReference>
<dbReference type="GeneID" id="93016580"/>
<dbReference type="KEGG" id="bmb:BruAb1_1080"/>
<dbReference type="HOGENOM" id="CLU_049768_3_1_5"/>
<dbReference type="UniPathway" id="UPA00848">
    <property type="reaction ID" value="UER00151"/>
</dbReference>
<dbReference type="Proteomes" id="UP000000540">
    <property type="component" value="Chromosome I"/>
</dbReference>
<dbReference type="GO" id="GO:0005737">
    <property type="term" value="C:cytoplasm"/>
    <property type="evidence" value="ECO:0007669"/>
    <property type="project" value="TreeGrafter"/>
</dbReference>
<dbReference type="GO" id="GO:0005525">
    <property type="term" value="F:GTP binding"/>
    <property type="evidence" value="ECO:0007669"/>
    <property type="project" value="UniProtKB-KW"/>
</dbReference>
<dbReference type="GO" id="GO:0003934">
    <property type="term" value="F:GTP cyclohydrolase I activity"/>
    <property type="evidence" value="ECO:0007669"/>
    <property type="project" value="UniProtKB-UniRule"/>
</dbReference>
<dbReference type="GO" id="GO:0008270">
    <property type="term" value="F:zinc ion binding"/>
    <property type="evidence" value="ECO:0007669"/>
    <property type="project" value="UniProtKB-UniRule"/>
</dbReference>
<dbReference type="GO" id="GO:0006730">
    <property type="term" value="P:one-carbon metabolic process"/>
    <property type="evidence" value="ECO:0007669"/>
    <property type="project" value="UniProtKB-UniRule"/>
</dbReference>
<dbReference type="GO" id="GO:0006729">
    <property type="term" value="P:tetrahydrobiopterin biosynthetic process"/>
    <property type="evidence" value="ECO:0007669"/>
    <property type="project" value="TreeGrafter"/>
</dbReference>
<dbReference type="GO" id="GO:0046654">
    <property type="term" value="P:tetrahydrofolate biosynthetic process"/>
    <property type="evidence" value="ECO:0007669"/>
    <property type="project" value="UniProtKB-UniRule"/>
</dbReference>
<dbReference type="FunFam" id="1.10.286.10:FF:000001">
    <property type="entry name" value="GTP cyclohydrolase 1"/>
    <property type="match status" value="1"/>
</dbReference>
<dbReference type="FunFam" id="3.30.1130.10:FF:000001">
    <property type="entry name" value="GTP cyclohydrolase 1"/>
    <property type="match status" value="1"/>
</dbReference>
<dbReference type="Gene3D" id="1.10.286.10">
    <property type="match status" value="1"/>
</dbReference>
<dbReference type="Gene3D" id="3.30.1130.10">
    <property type="match status" value="1"/>
</dbReference>
<dbReference type="HAMAP" id="MF_00223">
    <property type="entry name" value="FolE"/>
    <property type="match status" value="1"/>
</dbReference>
<dbReference type="InterPro" id="IPR043133">
    <property type="entry name" value="GTP-CH-I_C/QueF"/>
</dbReference>
<dbReference type="InterPro" id="IPR043134">
    <property type="entry name" value="GTP-CH-I_N"/>
</dbReference>
<dbReference type="InterPro" id="IPR001474">
    <property type="entry name" value="GTP_CycHdrlase_I"/>
</dbReference>
<dbReference type="InterPro" id="IPR018234">
    <property type="entry name" value="GTP_CycHdrlase_I_CS"/>
</dbReference>
<dbReference type="InterPro" id="IPR020602">
    <property type="entry name" value="GTP_CycHdrlase_I_dom"/>
</dbReference>
<dbReference type="NCBIfam" id="TIGR00063">
    <property type="entry name" value="folE"/>
    <property type="match status" value="1"/>
</dbReference>
<dbReference type="NCBIfam" id="NF006825">
    <property type="entry name" value="PRK09347.1-2"/>
    <property type="match status" value="1"/>
</dbReference>
<dbReference type="NCBIfam" id="NF006826">
    <property type="entry name" value="PRK09347.1-3"/>
    <property type="match status" value="1"/>
</dbReference>
<dbReference type="PANTHER" id="PTHR11109:SF7">
    <property type="entry name" value="GTP CYCLOHYDROLASE 1"/>
    <property type="match status" value="1"/>
</dbReference>
<dbReference type="PANTHER" id="PTHR11109">
    <property type="entry name" value="GTP CYCLOHYDROLASE I"/>
    <property type="match status" value="1"/>
</dbReference>
<dbReference type="Pfam" id="PF01227">
    <property type="entry name" value="GTP_cyclohydroI"/>
    <property type="match status" value="1"/>
</dbReference>
<dbReference type="SUPFAM" id="SSF55620">
    <property type="entry name" value="Tetrahydrobiopterin biosynthesis enzymes-like"/>
    <property type="match status" value="1"/>
</dbReference>
<dbReference type="PROSITE" id="PS00859">
    <property type="entry name" value="GTP_CYCLOHYDROL_1_1"/>
    <property type="match status" value="1"/>
</dbReference>
<protein>
    <recommendedName>
        <fullName evidence="2">GTP cyclohydrolase 1</fullName>
        <ecNumber evidence="2">3.5.4.16</ecNumber>
    </recommendedName>
    <alternativeName>
        <fullName evidence="2">GTP cyclohydrolase I</fullName>
        <shortName evidence="2">GTP-CH-I</shortName>
    </alternativeName>
</protein>
<gene>
    <name evidence="2" type="primary">folE</name>
    <name type="ordered locus">BruAb1_1080</name>
</gene>